<proteinExistence type="evidence at protein level"/>
<keyword id="KW-0002">3D-structure</keyword>
<keyword id="KW-0496">Mitochondrion</keyword>
<keyword id="KW-1185">Reference proteome</keyword>
<protein>
    <recommendedName>
        <fullName evidence="4">Large ribosomal subunit protein bL21m</fullName>
    </recommendedName>
</protein>
<gene>
    <name type="primary">mrpl49</name>
    <name type="ORF">NCU00977</name>
</gene>
<evidence type="ECO:0000256" key="1">
    <source>
        <dbReference type="SAM" id="MobiDB-lite"/>
    </source>
</evidence>
<evidence type="ECO:0000269" key="2">
    <source>
    </source>
</evidence>
<evidence type="ECO:0000269" key="3">
    <source>
    </source>
</evidence>
<evidence type="ECO:0000303" key="4">
    <source>
    </source>
</evidence>
<evidence type="ECO:0000305" key="5"/>
<evidence type="ECO:0000305" key="6">
    <source>
    </source>
</evidence>
<evidence type="ECO:0007744" key="7">
    <source>
        <dbReference type="PDB" id="6YWS"/>
    </source>
</evidence>
<evidence type="ECO:0007744" key="8">
    <source>
        <dbReference type="PDB" id="6YWV"/>
    </source>
</evidence>
<feature type="chain" id="PRO_0000458617" description="Large ribosomal subunit protein bL21m">
    <location>
        <begin position="1"/>
        <end position="217"/>
    </location>
</feature>
<feature type="region of interest" description="Disordered" evidence="1">
    <location>
        <begin position="61"/>
        <end position="87"/>
    </location>
</feature>
<feature type="compositionally biased region" description="Low complexity" evidence="1">
    <location>
        <begin position="61"/>
        <end position="81"/>
    </location>
</feature>
<reference key="1">
    <citation type="journal article" date="2003" name="Nature">
        <title>The genome sequence of the filamentous fungus Neurospora crassa.</title>
        <authorList>
            <person name="Galagan J.E."/>
            <person name="Calvo S.E."/>
            <person name="Borkovich K.A."/>
            <person name="Selker E.U."/>
            <person name="Read N.D."/>
            <person name="Jaffe D.B."/>
            <person name="FitzHugh W."/>
            <person name="Ma L.-J."/>
            <person name="Smirnov S."/>
            <person name="Purcell S."/>
            <person name="Rehman B."/>
            <person name="Elkins T."/>
            <person name="Engels R."/>
            <person name="Wang S."/>
            <person name="Nielsen C.B."/>
            <person name="Butler J."/>
            <person name="Endrizzi M."/>
            <person name="Qui D."/>
            <person name="Ianakiev P."/>
            <person name="Bell-Pedersen D."/>
            <person name="Nelson M.A."/>
            <person name="Werner-Washburne M."/>
            <person name="Selitrennikoff C.P."/>
            <person name="Kinsey J.A."/>
            <person name="Braun E.L."/>
            <person name="Zelter A."/>
            <person name="Schulte U."/>
            <person name="Kothe G.O."/>
            <person name="Jedd G."/>
            <person name="Mewes H.-W."/>
            <person name="Staben C."/>
            <person name="Marcotte E."/>
            <person name="Greenberg D."/>
            <person name="Roy A."/>
            <person name="Foley K."/>
            <person name="Naylor J."/>
            <person name="Stange-Thomann N."/>
            <person name="Barrett R."/>
            <person name="Gnerre S."/>
            <person name="Kamal M."/>
            <person name="Kamvysselis M."/>
            <person name="Mauceli E.W."/>
            <person name="Bielke C."/>
            <person name="Rudd S."/>
            <person name="Frishman D."/>
            <person name="Krystofova S."/>
            <person name="Rasmussen C."/>
            <person name="Metzenberg R.L."/>
            <person name="Perkins D.D."/>
            <person name="Kroken S."/>
            <person name="Cogoni C."/>
            <person name="Macino G."/>
            <person name="Catcheside D.E.A."/>
            <person name="Li W."/>
            <person name="Pratt R.J."/>
            <person name="Osmani S.A."/>
            <person name="DeSouza C.P.C."/>
            <person name="Glass N.L."/>
            <person name="Orbach M.J."/>
            <person name="Berglund J.A."/>
            <person name="Voelker R."/>
            <person name="Yarden O."/>
            <person name="Plamann M."/>
            <person name="Seiler S."/>
            <person name="Dunlap J.C."/>
            <person name="Radford A."/>
            <person name="Aramayo R."/>
            <person name="Natvig D.O."/>
            <person name="Alex L.A."/>
            <person name="Mannhaupt G."/>
            <person name="Ebbole D.J."/>
            <person name="Freitag M."/>
            <person name="Paulsen I."/>
            <person name="Sachs M.S."/>
            <person name="Lander E.S."/>
            <person name="Nusbaum C."/>
            <person name="Birren B.W."/>
        </authorList>
    </citation>
    <scope>NUCLEOTIDE SEQUENCE [LARGE SCALE GENOMIC DNA]</scope>
    <source>
        <strain>ATCC 24698 / 74-OR23-1A / CBS 708.71 / DSM 1257 / FGSC 987</strain>
    </source>
</reference>
<reference key="2">
    <citation type="journal article" date="2006" name="FEMS Microbiol. Lett.">
        <title>Identification and comparative analysis of the large subunit mitochondrial ribosomal proteins of Neurospora crassa.</title>
        <authorList>
            <person name="Gan X."/>
            <person name="Arita K."/>
            <person name="Isono S."/>
            <person name="Kitakawa M."/>
            <person name="Yoshino K."/>
            <person name="Yonezawa K."/>
            <person name="Kato A."/>
            <person name="Inoue H."/>
            <person name="Isono K."/>
        </authorList>
    </citation>
    <scope>IDENTIFICATION IN THE MITOCHONDRIAL RIBOSOMAL LARGE COMPLEX</scope>
    <scope>IDENTIFICATION BY MASS SPECTROMETRY</scope>
</reference>
<reference evidence="7 8" key="3">
    <citation type="journal article" date="2020" name="Nat. Commun.">
        <title>Analysis of translating mitoribosome reveals functional characteristics of translation in mitochondria of fungi.</title>
        <authorList>
            <person name="Itoh Y."/>
            <person name="Naschberger A."/>
            <person name="Mortezaei N."/>
            <person name="Herrmann J.M."/>
            <person name="Amunts A."/>
        </authorList>
    </citation>
    <scope>STRUCTURE BY ELECTRON MICROSCOPY (2.74 ANGSTROMS)</scope>
</reference>
<organism>
    <name type="scientific">Neurospora crassa (strain ATCC 24698 / 74-OR23-1A / CBS 708.71 / DSM 1257 / FGSC 987)</name>
    <dbReference type="NCBI Taxonomy" id="367110"/>
    <lineage>
        <taxon>Eukaryota</taxon>
        <taxon>Fungi</taxon>
        <taxon>Dikarya</taxon>
        <taxon>Ascomycota</taxon>
        <taxon>Pezizomycotina</taxon>
        <taxon>Sordariomycetes</taxon>
        <taxon>Sordariomycetidae</taxon>
        <taxon>Sordariales</taxon>
        <taxon>Sordariaceae</taxon>
        <taxon>Neurospora</taxon>
    </lineage>
</organism>
<name>RN49_NEUCR</name>
<sequence length="217" mass="23916">MSRALLRSVLELRTPVTRLPPSFLLPFRPAARFLHQTAQQVEPTSQSDAAAAAATLLKASPPKVTTATTPEAPAAVPTSTPFSQQPPISQQVKELLPVLAAQPGHYTTIHIHGKPYLVTEGDTVKLPFKMPGVAPGDVLRLNRASVIGSRDLTLQGAPYVDERLFECRAIVMGTESEPMRVMIKKKRRCRKKKHVFSKHKYTVLRINQLKINDVSSL</sequence>
<dbReference type="EMBL" id="CM002236">
    <property type="protein sequence ID" value="EAA35934.1"/>
    <property type="molecule type" value="Genomic_DNA"/>
</dbReference>
<dbReference type="RefSeq" id="XP_965170.1">
    <property type="nucleotide sequence ID" value="XM_960077.2"/>
</dbReference>
<dbReference type="PDB" id="6YWS">
    <property type="method" value="EM"/>
    <property type="resolution" value="2.74 A"/>
    <property type="chains" value="N=1-217"/>
</dbReference>
<dbReference type="PDB" id="6YWV">
    <property type="method" value="EM"/>
    <property type="resolution" value="3.03 A"/>
    <property type="chains" value="N=1-217"/>
</dbReference>
<dbReference type="PDB" id="6YWX">
    <property type="method" value="EM"/>
    <property type="resolution" value="3.10 A"/>
    <property type="chains" value="N=1-217"/>
</dbReference>
<dbReference type="PDBsum" id="6YWS"/>
<dbReference type="PDBsum" id="6YWV"/>
<dbReference type="PDBsum" id="6YWX"/>
<dbReference type="EMDB" id="EMD-10973"/>
<dbReference type="EMDB" id="EMD-10977"/>
<dbReference type="EMDB" id="EMD-10978"/>
<dbReference type="SMR" id="Q7SGE5"/>
<dbReference type="STRING" id="367110.Q7SGE5"/>
<dbReference type="PaxDb" id="5141-EFNCRP00000000532"/>
<dbReference type="EnsemblFungi" id="EAA35934">
    <property type="protein sequence ID" value="EAA35934"/>
    <property type="gene ID" value="NCU00977"/>
</dbReference>
<dbReference type="GeneID" id="3881306"/>
<dbReference type="KEGG" id="ncr:NCU00977"/>
<dbReference type="VEuPathDB" id="FungiDB:NCU00977"/>
<dbReference type="HOGENOM" id="CLU_061463_0_1_1"/>
<dbReference type="InParanoid" id="Q7SGE5"/>
<dbReference type="OrthoDB" id="5994at2759"/>
<dbReference type="Proteomes" id="UP000001805">
    <property type="component" value="Chromosome 1, Linkage Group I"/>
</dbReference>
<dbReference type="GO" id="GO:0005762">
    <property type="term" value="C:mitochondrial large ribosomal subunit"/>
    <property type="evidence" value="ECO:0000318"/>
    <property type="project" value="GO_Central"/>
</dbReference>
<dbReference type="GO" id="GO:0003735">
    <property type="term" value="F:structural constituent of ribosome"/>
    <property type="evidence" value="ECO:0000318"/>
    <property type="project" value="GO_Central"/>
</dbReference>
<dbReference type="InterPro" id="IPR028909">
    <property type="entry name" value="bL21-like"/>
</dbReference>
<dbReference type="InterPro" id="IPR036164">
    <property type="entry name" value="bL21-like_sf"/>
</dbReference>
<dbReference type="PANTHER" id="PTHR21349">
    <property type="entry name" value="50S RIBOSOMAL PROTEIN L21"/>
    <property type="match status" value="1"/>
</dbReference>
<dbReference type="PANTHER" id="PTHR21349:SF0">
    <property type="entry name" value="LARGE RIBOSOMAL SUBUNIT PROTEIN BL21M"/>
    <property type="match status" value="1"/>
</dbReference>
<dbReference type="Pfam" id="PF00829">
    <property type="entry name" value="Ribosomal_L21p"/>
    <property type="match status" value="1"/>
</dbReference>
<dbReference type="SUPFAM" id="SSF141091">
    <property type="entry name" value="L21p-like"/>
    <property type="match status" value="1"/>
</dbReference>
<comment type="function">
    <text evidence="6">Component of the mitochondrial ribosome (mitoribosome), a dedicated translation machinery responsible for the synthesis of mitochondrial genome-encoded proteins, including at least some of the essential transmembrane subunits of the mitochondrial respiratory chain. The mitoribosomes are attached to the mitochondrial inner membrane and translation products are cotranslationally integrated into the membrane.</text>
</comment>
<comment type="subunit">
    <text evidence="2 3">Component of the mitochondrial large ribosomal subunit (mt-LSU). Mature N.crassa 74S mitochondrial ribosomes consist of a small (37S) and a large (54S) subunit. The 37S small subunit contains a 16S ribosomal RNA (16S mt-rRNA) and 32 different proteins. The 54S large subunit contains a 23S rRNA (23S mt-rRNA) and 42 different proteins.</text>
</comment>
<comment type="subcellular location">
    <subcellularLocation>
        <location evidence="2 3">Mitochondrion</location>
    </subcellularLocation>
</comment>
<comment type="similarity">
    <text evidence="5">Belongs to the bacterial ribosomal protein bL21 family.</text>
</comment>
<accession>Q7SGE5</accession>